<evidence type="ECO:0000255" key="1">
    <source>
        <dbReference type="HAMAP-Rule" id="MF_00141"/>
    </source>
</evidence>
<keyword id="KW-0963">Cytoplasm</keyword>
<keyword id="KW-0251">Elongation factor</keyword>
<keyword id="KW-0648">Protein biosynthesis</keyword>
<proteinExistence type="inferred from homology"/>
<reference key="1">
    <citation type="journal article" date="2008" name="DNA Res.">
        <title>Comparative genome analysis of Lactobacillus reuteri and Lactobacillus fermentum reveal a genomic island for reuterin and cobalamin production.</title>
        <authorList>
            <person name="Morita H."/>
            <person name="Toh H."/>
            <person name="Fukuda S."/>
            <person name="Horikawa H."/>
            <person name="Oshima K."/>
            <person name="Suzuki T."/>
            <person name="Murakami M."/>
            <person name="Hisamatsu S."/>
            <person name="Kato Y."/>
            <person name="Takizawa T."/>
            <person name="Fukuoka H."/>
            <person name="Yoshimura T."/>
            <person name="Itoh K."/>
            <person name="O'Sullivan D.J."/>
            <person name="McKay L.L."/>
            <person name="Ohno H."/>
            <person name="Kikuchi J."/>
            <person name="Masaoka T."/>
            <person name="Hattori M."/>
        </authorList>
    </citation>
    <scope>NUCLEOTIDE SEQUENCE [LARGE SCALE GENOMIC DNA]</scope>
    <source>
        <strain>JCM 1112</strain>
    </source>
</reference>
<feature type="chain" id="PRO_1000096168" description="Elongation factor P">
    <location>
        <begin position="1"/>
        <end position="185"/>
    </location>
</feature>
<gene>
    <name evidence="1" type="primary">efp</name>
    <name type="ordered locus">LAR_1483</name>
</gene>
<comment type="function">
    <text evidence="1">Involved in peptide bond synthesis. Stimulates efficient translation and peptide-bond synthesis on native or reconstituted 70S ribosomes in vitro. Probably functions indirectly by altering the affinity of the ribosome for aminoacyl-tRNA, thus increasing their reactivity as acceptors for peptidyl transferase.</text>
</comment>
<comment type="pathway">
    <text evidence="1">Protein biosynthesis; polypeptide chain elongation.</text>
</comment>
<comment type="subcellular location">
    <subcellularLocation>
        <location evidence="1">Cytoplasm</location>
    </subcellularLocation>
</comment>
<comment type="similarity">
    <text evidence="1">Belongs to the elongation factor P family.</text>
</comment>
<organism>
    <name type="scientific">Limosilactobacillus reuteri subsp. reuteri (strain JCM 1112)</name>
    <name type="common">Lactobacillus reuteri</name>
    <dbReference type="NCBI Taxonomy" id="557433"/>
    <lineage>
        <taxon>Bacteria</taxon>
        <taxon>Bacillati</taxon>
        <taxon>Bacillota</taxon>
        <taxon>Bacilli</taxon>
        <taxon>Lactobacillales</taxon>
        <taxon>Lactobacillaceae</taxon>
        <taxon>Limosilactobacillus</taxon>
    </lineage>
</organism>
<dbReference type="EMBL" id="AP007281">
    <property type="protein sequence ID" value="BAG25999.1"/>
    <property type="molecule type" value="Genomic_DNA"/>
</dbReference>
<dbReference type="RefSeq" id="WP_003664757.1">
    <property type="nucleotide sequence ID" value="NC_010609.1"/>
</dbReference>
<dbReference type="SMR" id="B2G967"/>
<dbReference type="KEGG" id="lrf:LAR_1483"/>
<dbReference type="HOGENOM" id="CLU_074944_3_0_9"/>
<dbReference type="UniPathway" id="UPA00345"/>
<dbReference type="GO" id="GO:0005737">
    <property type="term" value="C:cytoplasm"/>
    <property type="evidence" value="ECO:0007669"/>
    <property type="project" value="UniProtKB-SubCell"/>
</dbReference>
<dbReference type="GO" id="GO:0003746">
    <property type="term" value="F:translation elongation factor activity"/>
    <property type="evidence" value="ECO:0007669"/>
    <property type="project" value="UniProtKB-UniRule"/>
</dbReference>
<dbReference type="GO" id="GO:0043043">
    <property type="term" value="P:peptide biosynthetic process"/>
    <property type="evidence" value="ECO:0007669"/>
    <property type="project" value="InterPro"/>
</dbReference>
<dbReference type="CDD" id="cd04470">
    <property type="entry name" value="S1_EF-P_repeat_1"/>
    <property type="match status" value="1"/>
</dbReference>
<dbReference type="CDD" id="cd05794">
    <property type="entry name" value="S1_EF-P_repeat_2"/>
    <property type="match status" value="1"/>
</dbReference>
<dbReference type="FunFam" id="2.30.30.30:FF:000003">
    <property type="entry name" value="Elongation factor P"/>
    <property type="match status" value="1"/>
</dbReference>
<dbReference type="FunFam" id="2.40.50.140:FF:000004">
    <property type="entry name" value="Elongation factor P"/>
    <property type="match status" value="1"/>
</dbReference>
<dbReference type="FunFam" id="2.40.50.140:FF:000009">
    <property type="entry name" value="Elongation factor P"/>
    <property type="match status" value="1"/>
</dbReference>
<dbReference type="Gene3D" id="2.30.30.30">
    <property type="match status" value="1"/>
</dbReference>
<dbReference type="Gene3D" id="2.40.50.140">
    <property type="entry name" value="Nucleic acid-binding proteins"/>
    <property type="match status" value="2"/>
</dbReference>
<dbReference type="HAMAP" id="MF_00141">
    <property type="entry name" value="EF_P"/>
    <property type="match status" value="1"/>
</dbReference>
<dbReference type="InterPro" id="IPR015365">
    <property type="entry name" value="Elong-fact-P_C"/>
</dbReference>
<dbReference type="InterPro" id="IPR012340">
    <property type="entry name" value="NA-bd_OB-fold"/>
</dbReference>
<dbReference type="InterPro" id="IPR014722">
    <property type="entry name" value="Rib_uL2_dom2"/>
</dbReference>
<dbReference type="InterPro" id="IPR020599">
    <property type="entry name" value="Transl_elong_fac_P/YeiP"/>
</dbReference>
<dbReference type="InterPro" id="IPR013185">
    <property type="entry name" value="Transl_elong_KOW-like"/>
</dbReference>
<dbReference type="InterPro" id="IPR001059">
    <property type="entry name" value="Transl_elong_P/YeiP_cen"/>
</dbReference>
<dbReference type="InterPro" id="IPR013852">
    <property type="entry name" value="Transl_elong_P/YeiP_CS"/>
</dbReference>
<dbReference type="InterPro" id="IPR011768">
    <property type="entry name" value="Transl_elongation_fac_P"/>
</dbReference>
<dbReference type="InterPro" id="IPR008991">
    <property type="entry name" value="Translation_prot_SH3-like_sf"/>
</dbReference>
<dbReference type="NCBIfam" id="TIGR00038">
    <property type="entry name" value="efp"/>
    <property type="match status" value="1"/>
</dbReference>
<dbReference type="NCBIfam" id="NF001810">
    <property type="entry name" value="PRK00529.1"/>
    <property type="match status" value="1"/>
</dbReference>
<dbReference type="PANTHER" id="PTHR30053">
    <property type="entry name" value="ELONGATION FACTOR P"/>
    <property type="match status" value="1"/>
</dbReference>
<dbReference type="PANTHER" id="PTHR30053:SF12">
    <property type="entry name" value="ELONGATION FACTOR P (EF-P) FAMILY PROTEIN"/>
    <property type="match status" value="1"/>
</dbReference>
<dbReference type="Pfam" id="PF01132">
    <property type="entry name" value="EFP"/>
    <property type="match status" value="1"/>
</dbReference>
<dbReference type="Pfam" id="PF08207">
    <property type="entry name" value="EFP_N"/>
    <property type="match status" value="1"/>
</dbReference>
<dbReference type="Pfam" id="PF09285">
    <property type="entry name" value="Elong-fact-P_C"/>
    <property type="match status" value="1"/>
</dbReference>
<dbReference type="PIRSF" id="PIRSF005901">
    <property type="entry name" value="EF-P"/>
    <property type="match status" value="1"/>
</dbReference>
<dbReference type="SMART" id="SM01185">
    <property type="entry name" value="EFP"/>
    <property type="match status" value="1"/>
</dbReference>
<dbReference type="SMART" id="SM00841">
    <property type="entry name" value="Elong-fact-P_C"/>
    <property type="match status" value="1"/>
</dbReference>
<dbReference type="SUPFAM" id="SSF50249">
    <property type="entry name" value="Nucleic acid-binding proteins"/>
    <property type="match status" value="2"/>
</dbReference>
<dbReference type="SUPFAM" id="SSF50104">
    <property type="entry name" value="Translation proteins SH3-like domain"/>
    <property type="match status" value="1"/>
</dbReference>
<dbReference type="PROSITE" id="PS01275">
    <property type="entry name" value="EFP"/>
    <property type="match status" value="1"/>
</dbReference>
<accession>B2G967</accession>
<protein>
    <recommendedName>
        <fullName evidence="1">Elongation factor P</fullName>
        <shortName evidence="1">EF-P</shortName>
    </recommendedName>
</protein>
<name>EFP_LIMRJ</name>
<sequence>MIQTIDLKKGMVFERDGKLLKVLQINHHKPGKGNTLMQMDIQDLRSGSIVHTTMRPSEKVEQVNVDKRSAQYLYDEGDSAVFMDLESYEQYSLNHDLLGDDKNYLVENMKVILNFVNGDIIGVELPTTVELTVAETEPMIKGATIDGGGKPATMETGLVVNVPAFIKNGDKLIINTTDGSYKSRA</sequence>